<dbReference type="EC" id="4.4.1.21" evidence="1"/>
<dbReference type="EMBL" id="AE004969">
    <property type="protein sequence ID" value="AAW90703.1"/>
    <property type="molecule type" value="Genomic_DNA"/>
</dbReference>
<dbReference type="RefSeq" id="WP_003687075.1">
    <property type="nucleotide sequence ID" value="NC_002946.2"/>
</dbReference>
<dbReference type="RefSeq" id="YP_209115.1">
    <property type="nucleotide sequence ID" value="NC_002946.2"/>
</dbReference>
<dbReference type="SMR" id="Q5F534"/>
<dbReference type="STRING" id="242231.NGO_2102"/>
<dbReference type="GeneID" id="66754430"/>
<dbReference type="KEGG" id="ngo:NGO_2102"/>
<dbReference type="PATRIC" id="fig|242231.10.peg.2543"/>
<dbReference type="HOGENOM" id="CLU_107531_2_0_4"/>
<dbReference type="Proteomes" id="UP000000535">
    <property type="component" value="Chromosome"/>
</dbReference>
<dbReference type="GO" id="GO:0005506">
    <property type="term" value="F:iron ion binding"/>
    <property type="evidence" value="ECO:0007669"/>
    <property type="project" value="InterPro"/>
</dbReference>
<dbReference type="GO" id="GO:0043768">
    <property type="term" value="F:S-ribosylhomocysteine lyase activity"/>
    <property type="evidence" value="ECO:0007669"/>
    <property type="project" value="UniProtKB-UniRule"/>
</dbReference>
<dbReference type="GO" id="GO:0009372">
    <property type="term" value="P:quorum sensing"/>
    <property type="evidence" value="ECO:0007669"/>
    <property type="project" value="UniProtKB-UniRule"/>
</dbReference>
<dbReference type="FunFam" id="3.30.1360.80:FF:000001">
    <property type="entry name" value="S-ribosylhomocysteine lyase"/>
    <property type="match status" value="1"/>
</dbReference>
<dbReference type="Gene3D" id="3.30.1360.80">
    <property type="entry name" value="S-ribosylhomocysteinase (LuxS)"/>
    <property type="match status" value="1"/>
</dbReference>
<dbReference type="HAMAP" id="MF_00091">
    <property type="entry name" value="LuxS"/>
    <property type="match status" value="1"/>
</dbReference>
<dbReference type="InterPro" id="IPR037005">
    <property type="entry name" value="LuxS_sf"/>
</dbReference>
<dbReference type="InterPro" id="IPR011249">
    <property type="entry name" value="Metalloenz_LuxS/M16"/>
</dbReference>
<dbReference type="InterPro" id="IPR003815">
    <property type="entry name" value="S-ribosylhomocysteinase"/>
</dbReference>
<dbReference type="NCBIfam" id="NF002602">
    <property type="entry name" value="PRK02260.1-2"/>
    <property type="match status" value="1"/>
</dbReference>
<dbReference type="PANTHER" id="PTHR35799">
    <property type="entry name" value="S-RIBOSYLHOMOCYSTEINE LYASE"/>
    <property type="match status" value="1"/>
</dbReference>
<dbReference type="PANTHER" id="PTHR35799:SF1">
    <property type="entry name" value="S-RIBOSYLHOMOCYSTEINE LYASE"/>
    <property type="match status" value="1"/>
</dbReference>
<dbReference type="Pfam" id="PF02664">
    <property type="entry name" value="LuxS"/>
    <property type="match status" value="1"/>
</dbReference>
<dbReference type="PIRSF" id="PIRSF006160">
    <property type="entry name" value="AI2"/>
    <property type="match status" value="1"/>
</dbReference>
<dbReference type="PRINTS" id="PR01487">
    <property type="entry name" value="LUXSPROTEIN"/>
</dbReference>
<dbReference type="SUPFAM" id="SSF63411">
    <property type="entry name" value="LuxS/MPP-like metallohydrolase"/>
    <property type="match status" value="1"/>
</dbReference>
<gene>
    <name evidence="1" type="primary">luxS</name>
    <name type="ordered locus">NGO_2102</name>
</gene>
<sequence>MPLLDSFKVDHTRMHAPAVRVAKTMTTPKGDTITVFDLRFCIPNKEILPEKGIHTLEHLFAGFMRDHLNGAGVEIIDISPMGCRTGFYMSLIGTPSEQQVADAWLASMQDVLNVKDQSKIPELNEYQCGTYLMHSLAEAQQIAQNVLARKVAVNRNGDLALDESLLNA</sequence>
<reference key="1">
    <citation type="submission" date="2003-03" db="EMBL/GenBank/DDBJ databases">
        <title>The complete genome sequence of Neisseria gonorrhoeae.</title>
        <authorList>
            <person name="Lewis L.A."/>
            <person name="Gillaspy A.F."/>
            <person name="McLaughlin R.E."/>
            <person name="Gipson M."/>
            <person name="Ducey T.F."/>
            <person name="Ownbey T."/>
            <person name="Hartman K."/>
            <person name="Nydick C."/>
            <person name="Carson M.B."/>
            <person name="Vaughn J."/>
            <person name="Thomson C."/>
            <person name="Song L."/>
            <person name="Lin S."/>
            <person name="Yuan X."/>
            <person name="Najar F."/>
            <person name="Zhan M."/>
            <person name="Ren Q."/>
            <person name="Zhu H."/>
            <person name="Qi S."/>
            <person name="Kenton S.M."/>
            <person name="Lai H."/>
            <person name="White J.D."/>
            <person name="Clifton S."/>
            <person name="Roe B.A."/>
            <person name="Dyer D.W."/>
        </authorList>
    </citation>
    <scope>NUCLEOTIDE SEQUENCE [LARGE SCALE GENOMIC DNA]</scope>
    <source>
        <strain>ATCC 700825 / FA 1090</strain>
    </source>
</reference>
<accession>Q5F534</accession>
<protein>
    <recommendedName>
        <fullName evidence="1">S-ribosylhomocysteine lyase</fullName>
        <ecNumber evidence="1">4.4.1.21</ecNumber>
    </recommendedName>
    <alternativeName>
        <fullName evidence="1">AI-2 synthesis protein</fullName>
    </alternativeName>
    <alternativeName>
        <fullName evidence="1">Autoinducer-2 production protein LuxS</fullName>
    </alternativeName>
</protein>
<organism>
    <name type="scientific">Neisseria gonorrhoeae (strain ATCC 700825 / FA 1090)</name>
    <dbReference type="NCBI Taxonomy" id="242231"/>
    <lineage>
        <taxon>Bacteria</taxon>
        <taxon>Pseudomonadati</taxon>
        <taxon>Pseudomonadota</taxon>
        <taxon>Betaproteobacteria</taxon>
        <taxon>Neisseriales</taxon>
        <taxon>Neisseriaceae</taxon>
        <taxon>Neisseria</taxon>
    </lineage>
</organism>
<evidence type="ECO:0000255" key="1">
    <source>
        <dbReference type="HAMAP-Rule" id="MF_00091"/>
    </source>
</evidence>
<feature type="chain" id="PRO_0000298015" description="S-ribosylhomocysteine lyase">
    <location>
        <begin position="1"/>
        <end position="168"/>
    </location>
</feature>
<feature type="binding site" evidence="1">
    <location>
        <position position="54"/>
    </location>
    <ligand>
        <name>Fe cation</name>
        <dbReference type="ChEBI" id="CHEBI:24875"/>
    </ligand>
</feature>
<feature type="binding site" evidence="1">
    <location>
        <position position="58"/>
    </location>
    <ligand>
        <name>Fe cation</name>
        <dbReference type="ChEBI" id="CHEBI:24875"/>
    </ligand>
</feature>
<feature type="binding site" evidence="1">
    <location>
        <position position="128"/>
    </location>
    <ligand>
        <name>Fe cation</name>
        <dbReference type="ChEBI" id="CHEBI:24875"/>
    </ligand>
</feature>
<comment type="function">
    <text evidence="1">Involved in the synthesis of autoinducer 2 (AI-2) which is secreted by bacteria and is used to communicate both the cell density and the metabolic potential of the environment. The regulation of gene expression in response to changes in cell density is called quorum sensing. Catalyzes the transformation of S-ribosylhomocysteine (RHC) to homocysteine (HC) and 4,5-dihydroxy-2,3-pentadione (DPD).</text>
</comment>
<comment type="catalytic activity">
    <reaction evidence="1">
        <text>S-(5-deoxy-D-ribos-5-yl)-L-homocysteine = (S)-4,5-dihydroxypentane-2,3-dione + L-homocysteine</text>
        <dbReference type="Rhea" id="RHEA:17753"/>
        <dbReference type="ChEBI" id="CHEBI:29484"/>
        <dbReference type="ChEBI" id="CHEBI:58195"/>
        <dbReference type="ChEBI" id="CHEBI:58199"/>
        <dbReference type="EC" id="4.4.1.21"/>
    </reaction>
</comment>
<comment type="cofactor">
    <cofactor evidence="1">
        <name>Fe cation</name>
        <dbReference type="ChEBI" id="CHEBI:24875"/>
    </cofactor>
    <text evidence="1">Binds 1 Fe cation per subunit.</text>
</comment>
<comment type="subunit">
    <text evidence="1">Homodimer.</text>
</comment>
<comment type="similarity">
    <text evidence="1">Belongs to the LuxS family.</text>
</comment>
<keyword id="KW-0071">Autoinducer synthesis</keyword>
<keyword id="KW-0408">Iron</keyword>
<keyword id="KW-0456">Lyase</keyword>
<keyword id="KW-0479">Metal-binding</keyword>
<keyword id="KW-0673">Quorum sensing</keyword>
<keyword id="KW-1185">Reference proteome</keyword>
<name>LUXS_NEIG1</name>
<proteinExistence type="inferred from homology"/>